<name>URK_STRMU</name>
<reference key="1">
    <citation type="journal article" date="2002" name="Proc. Natl. Acad. Sci. U.S.A.">
        <title>Genome sequence of Streptococcus mutans UA159, a cariogenic dental pathogen.</title>
        <authorList>
            <person name="Ajdic D.J."/>
            <person name="McShan W.M."/>
            <person name="McLaughlin R.E."/>
            <person name="Savic G."/>
            <person name="Chang J."/>
            <person name="Carson M.B."/>
            <person name="Primeaux C."/>
            <person name="Tian R."/>
            <person name="Kenton S."/>
            <person name="Jia H.G."/>
            <person name="Lin S.P."/>
            <person name="Qian Y."/>
            <person name="Li S."/>
            <person name="Zhu H."/>
            <person name="Najar F.Z."/>
            <person name="Lai H."/>
            <person name="White J."/>
            <person name="Roe B.A."/>
            <person name="Ferretti J.J."/>
        </authorList>
    </citation>
    <scope>NUCLEOTIDE SEQUENCE [LARGE SCALE GENOMIC DNA]</scope>
    <source>
        <strain>ATCC 700610 / UA159</strain>
    </source>
</reference>
<accession>Q8DTG1</accession>
<comment type="catalytic activity">
    <reaction evidence="1">
        <text>uridine + ATP = UMP + ADP + H(+)</text>
        <dbReference type="Rhea" id="RHEA:16825"/>
        <dbReference type="ChEBI" id="CHEBI:15378"/>
        <dbReference type="ChEBI" id="CHEBI:16704"/>
        <dbReference type="ChEBI" id="CHEBI:30616"/>
        <dbReference type="ChEBI" id="CHEBI:57865"/>
        <dbReference type="ChEBI" id="CHEBI:456216"/>
        <dbReference type="EC" id="2.7.1.48"/>
    </reaction>
</comment>
<comment type="catalytic activity">
    <reaction evidence="1">
        <text>cytidine + ATP = CMP + ADP + H(+)</text>
        <dbReference type="Rhea" id="RHEA:24674"/>
        <dbReference type="ChEBI" id="CHEBI:15378"/>
        <dbReference type="ChEBI" id="CHEBI:17562"/>
        <dbReference type="ChEBI" id="CHEBI:30616"/>
        <dbReference type="ChEBI" id="CHEBI:60377"/>
        <dbReference type="ChEBI" id="CHEBI:456216"/>
        <dbReference type="EC" id="2.7.1.48"/>
    </reaction>
</comment>
<comment type="pathway">
    <text evidence="1">Pyrimidine metabolism; CTP biosynthesis via salvage pathway; CTP from cytidine: step 1/3.</text>
</comment>
<comment type="pathway">
    <text evidence="1">Pyrimidine metabolism; UMP biosynthesis via salvage pathway; UMP from uridine: step 1/1.</text>
</comment>
<comment type="subcellular location">
    <subcellularLocation>
        <location evidence="1">Cytoplasm</location>
    </subcellularLocation>
</comment>
<comment type="similarity">
    <text evidence="1">Belongs to the uridine kinase family.</text>
</comment>
<sequence>MRKKPIIIGVTGGSGSGKTSVSRAILANFPNAKIAMIEHDSYYKDQSHLTFEERVTTNYDHPLAFETDLLINHLKELIADRPVDIPIYDYTQHTRSEKSYRQEPQDVFIVEGILVLEDQRLRDLMDIKLFVDTDDDIRIIRRIKRDMQERGRSLDSIIEQYTRVVKPMYHQFIEPTKRYADIVVPEGVSNLVAIDLINTKVASILNETH</sequence>
<organism>
    <name type="scientific">Streptococcus mutans serotype c (strain ATCC 700610 / UA159)</name>
    <dbReference type="NCBI Taxonomy" id="210007"/>
    <lineage>
        <taxon>Bacteria</taxon>
        <taxon>Bacillati</taxon>
        <taxon>Bacillota</taxon>
        <taxon>Bacilli</taxon>
        <taxon>Lactobacillales</taxon>
        <taxon>Streptococcaceae</taxon>
        <taxon>Streptococcus</taxon>
    </lineage>
</organism>
<feature type="chain" id="PRO_0000164498" description="Uridine kinase">
    <location>
        <begin position="1"/>
        <end position="209"/>
    </location>
</feature>
<feature type="binding site" evidence="1">
    <location>
        <begin position="12"/>
        <end position="19"/>
    </location>
    <ligand>
        <name>ATP</name>
        <dbReference type="ChEBI" id="CHEBI:30616"/>
    </ligand>
</feature>
<proteinExistence type="inferred from homology"/>
<keyword id="KW-0067">ATP-binding</keyword>
<keyword id="KW-0963">Cytoplasm</keyword>
<keyword id="KW-0418">Kinase</keyword>
<keyword id="KW-0547">Nucleotide-binding</keyword>
<keyword id="KW-1185">Reference proteome</keyword>
<keyword id="KW-0808">Transferase</keyword>
<evidence type="ECO:0000255" key="1">
    <source>
        <dbReference type="HAMAP-Rule" id="MF_00551"/>
    </source>
</evidence>
<protein>
    <recommendedName>
        <fullName evidence="1">Uridine kinase</fullName>
        <ecNumber evidence="1">2.7.1.48</ecNumber>
    </recommendedName>
    <alternativeName>
        <fullName evidence="1">Cytidine monophosphokinase</fullName>
    </alternativeName>
    <alternativeName>
        <fullName evidence="1">Uridine monophosphokinase</fullName>
    </alternativeName>
</protein>
<gene>
    <name evidence="1" type="primary">udk</name>
    <name type="synonym">urk</name>
    <name type="ordered locus">SMU_1386</name>
</gene>
<dbReference type="EC" id="2.7.1.48" evidence="1"/>
<dbReference type="EMBL" id="AE014133">
    <property type="protein sequence ID" value="AAN59052.1"/>
    <property type="molecule type" value="Genomic_DNA"/>
</dbReference>
<dbReference type="RefSeq" id="NP_721746.1">
    <property type="nucleotide sequence ID" value="NC_004350.2"/>
</dbReference>
<dbReference type="RefSeq" id="WP_002262709.1">
    <property type="nucleotide sequence ID" value="NC_004350.2"/>
</dbReference>
<dbReference type="SMR" id="Q8DTG1"/>
<dbReference type="STRING" id="210007.SMU_1386"/>
<dbReference type="KEGG" id="smu:SMU_1386"/>
<dbReference type="PATRIC" id="fig|210007.7.peg.1232"/>
<dbReference type="eggNOG" id="COG0572">
    <property type="taxonomic scope" value="Bacteria"/>
</dbReference>
<dbReference type="HOGENOM" id="CLU_021278_1_2_9"/>
<dbReference type="OrthoDB" id="9777642at2"/>
<dbReference type="PhylomeDB" id="Q8DTG1"/>
<dbReference type="UniPathway" id="UPA00574">
    <property type="reaction ID" value="UER00637"/>
</dbReference>
<dbReference type="UniPathway" id="UPA00579">
    <property type="reaction ID" value="UER00640"/>
</dbReference>
<dbReference type="Proteomes" id="UP000002512">
    <property type="component" value="Chromosome"/>
</dbReference>
<dbReference type="GO" id="GO:0005737">
    <property type="term" value="C:cytoplasm"/>
    <property type="evidence" value="ECO:0007669"/>
    <property type="project" value="UniProtKB-SubCell"/>
</dbReference>
<dbReference type="GO" id="GO:0005524">
    <property type="term" value="F:ATP binding"/>
    <property type="evidence" value="ECO:0007669"/>
    <property type="project" value="UniProtKB-UniRule"/>
</dbReference>
<dbReference type="GO" id="GO:0043771">
    <property type="term" value="F:cytidine kinase activity"/>
    <property type="evidence" value="ECO:0007669"/>
    <property type="project" value="RHEA"/>
</dbReference>
<dbReference type="GO" id="GO:0004849">
    <property type="term" value="F:uridine kinase activity"/>
    <property type="evidence" value="ECO:0007669"/>
    <property type="project" value="UniProtKB-UniRule"/>
</dbReference>
<dbReference type="GO" id="GO:0044211">
    <property type="term" value="P:CTP salvage"/>
    <property type="evidence" value="ECO:0007669"/>
    <property type="project" value="UniProtKB-UniRule"/>
</dbReference>
<dbReference type="GO" id="GO:0044206">
    <property type="term" value="P:UMP salvage"/>
    <property type="evidence" value="ECO:0007669"/>
    <property type="project" value="UniProtKB-UniRule"/>
</dbReference>
<dbReference type="CDD" id="cd02023">
    <property type="entry name" value="UMPK"/>
    <property type="match status" value="1"/>
</dbReference>
<dbReference type="Gene3D" id="3.40.50.300">
    <property type="entry name" value="P-loop containing nucleotide triphosphate hydrolases"/>
    <property type="match status" value="1"/>
</dbReference>
<dbReference type="HAMAP" id="MF_00551">
    <property type="entry name" value="Uridine_kinase"/>
    <property type="match status" value="1"/>
</dbReference>
<dbReference type="InterPro" id="IPR027417">
    <property type="entry name" value="P-loop_NTPase"/>
</dbReference>
<dbReference type="InterPro" id="IPR006083">
    <property type="entry name" value="PRK/URK"/>
</dbReference>
<dbReference type="InterPro" id="IPR026008">
    <property type="entry name" value="Uridine_kinase"/>
</dbReference>
<dbReference type="InterPro" id="IPR000764">
    <property type="entry name" value="Uridine_kinase-like"/>
</dbReference>
<dbReference type="NCBIfam" id="NF004018">
    <property type="entry name" value="PRK05480.1"/>
    <property type="match status" value="1"/>
</dbReference>
<dbReference type="NCBIfam" id="TIGR00235">
    <property type="entry name" value="udk"/>
    <property type="match status" value="1"/>
</dbReference>
<dbReference type="PANTHER" id="PTHR10285">
    <property type="entry name" value="URIDINE KINASE"/>
    <property type="match status" value="1"/>
</dbReference>
<dbReference type="Pfam" id="PF00485">
    <property type="entry name" value="PRK"/>
    <property type="match status" value="1"/>
</dbReference>
<dbReference type="PRINTS" id="PR00988">
    <property type="entry name" value="URIDINKINASE"/>
</dbReference>
<dbReference type="SUPFAM" id="SSF52540">
    <property type="entry name" value="P-loop containing nucleoside triphosphate hydrolases"/>
    <property type="match status" value="1"/>
</dbReference>